<sequence>MQGTMRLWVSVLTFALSLLICLGTLAEAYPSKPDSPGEDAPAEDMARYYSALRHYINLITRQRYGKRSSPETLISDLLLRESTENIPRSRFEDPSMW</sequence>
<protein>
    <recommendedName>
        <fullName>Pro-neuropeptide Y</fullName>
    </recommendedName>
    <component>
        <recommendedName>
            <fullName>Neuropeptide Y</fullName>
        </recommendedName>
        <alternativeName>
            <fullName>Neuropeptide tyrosine</fullName>
            <shortName>NPY</shortName>
        </alternativeName>
    </component>
    <component>
        <recommendedName>
            <fullName>C-flanking peptide of NPY</fullName>
            <shortName>CPON</shortName>
        </recommendedName>
    </component>
</protein>
<reference key="1">
    <citation type="journal article" date="1992" name="Proc. Natl. Acad. Sci. U.S.A.">
        <title>Strong evolutionary conservation of neuropeptide Y: sequences of chicken, goldfish, and Torpedo marmorata DNA clones.</title>
        <authorList>
            <person name="Blomqvist A.G."/>
            <person name="Soederberg C."/>
            <person name="Lundell I."/>
            <person name="Milner R.J."/>
            <person name="Larhammar D."/>
        </authorList>
    </citation>
    <scope>NUCLEOTIDE SEQUENCE [GENOMIC DNA / MRNA]</scope>
    <source>
        <tissue>Brain</tissue>
    </source>
</reference>
<comment type="function">
    <text>NPY is implicated in the control of feeding and in secretion of gonadotrophin-release hormone.</text>
</comment>
<comment type="subcellular location">
    <subcellularLocation>
        <location>Secreted</location>
    </subcellularLocation>
    <subcellularLocation>
        <location evidence="2">Cytoplasmic vesicle</location>
        <location evidence="2">Secretory vesicle</location>
        <location evidence="2">Neuronal dense core vesicle</location>
    </subcellularLocation>
</comment>
<comment type="similarity">
    <text evidence="3">Belongs to the NPY family.</text>
</comment>
<keyword id="KW-0027">Amidation</keyword>
<keyword id="KW-0165">Cleavage on pair of basic residues</keyword>
<keyword id="KW-0968">Cytoplasmic vesicle</keyword>
<keyword id="KW-0527">Neuropeptide</keyword>
<keyword id="KW-1185">Reference proteome</keyword>
<keyword id="KW-0964">Secreted</keyword>
<keyword id="KW-0732">Signal</keyword>
<proteinExistence type="inferred from homology"/>
<organism>
    <name type="scientific">Gallus gallus</name>
    <name type="common">Chicken</name>
    <dbReference type="NCBI Taxonomy" id="9031"/>
    <lineage>
        <taxon>Eukaryota</taxon>
        <taxon>Metazoa</taxon>
        <taxon>Chordata</taxon>
        <taxon>Craniata</taxon>
        <taxon>Vertebrata</taxon>
        <taxon>Euteleostomi</taxon>
        <taxon>Archelosauria</taxon>
        <taxon>Archosauria</taxon>
        <taxon>Dinosauria</taxon>
        <taxon>Saurischia</taxon>
        <taxon>Theropoda</taxon>
        <taxon>Coelurosauria</taxon>
        <taxon>Aves</taxon>
        <taxon>Neognathae</taxon>
        <taxon>Galloanserae</taxon>
        <taxon>Galliformes</taxon>
        <taxon>Phasianidae</taxon>
        <taxon>Phasianinae</taxon>
        <taxon>Gallus</taxon>
    </lineage>
</organism>
<name>NPY_CHICK</name>
<dbReference type="EMBL" id="M87294">
    <property type="protein sequence ID" value="AAA48991.1"/>
    <property type="molecule type" value="mRNA"/>
</dbReference>
<dbReference type="EMBL" id="M87295">
    <property type="protein sequence ID" value="AAA48992.1"/>
    <property type="molecule type" value="Genomic_DNA"/>
</dbReference>
<dbReference type="EMBL" id="M87298">
    <property type="protein sequence ID" value="AAA48992.1"/>
    <property type="status" value="JOINED"/>
    <property type="molecule type" value="Genomic_DNA"/>
</dbReference>
<dbReference type="PIR" id="A41979">
    <property type="entry name" value="A41979"/>
</dbReference>
<dbReference type="RefSeq" id="NP_990804.1">
    <property type="nucleotide sequence ID" value="NM_205473.2"/>
</dbReference>
<dbReference type="FunCoup" id="P28673">
    <property type="interactions" value="7"/>
</dbReference>
<dbReference type="STRING" id="9031.ENSGALP00000017870"/>
<dbReference type="PaxDb" id="9031-ENSGALP00000017870"/>
<dbReference type="GeneID" id="396464"/>
<dbReference type="KEGG" id="gga:396464"/>
<dbReference type="CTD" id="4852"/>
<dbReference type="VEuPathDB" id="HostDB:geneid_396464"/>
<dbReference type="eggNOG" id="ENOG502S2BU">
    <property type="taxonomic scope" value="Eukaryota"/>
</dbReference>
<dbReference type="HOGENOM" id="CLU_162379_1_0_1"/>
<dbReference type="InParanoid" id="P28673"/>
<dbReference type="OMA" id="YEDPAMW"/>
<dbReference type="OrthoDB" id="9852947at2759"/>
<dbReference type="PhylomeDB" id="P28673"/>
<dbReference type="TreeFam" id="TF332778"/>
<dbReference type="Reactome" id="R-GGA-375276">
    <property type="pathway name" value="Peptide ligand-binding receptors"/>
</dbReference>
<dbReference type="Reactome" id="R-GGA-418594">
    <property type="pathway name" value="G alpha (i) signalling events"/>
</dbReference>
<dbReference type="PRO" id="PR:P28673"/>
<dbReference type="Proteomes" id="UP000000539">
    <property type="component" value="Chromosome 2"/>
</dbReference>
<dbReference type="Bgee" id="ENSGALG00000010983">
    <property type="expression patterns" value="Expressed in brain and 11 other cell types or tissues"/>
</dbReference>
<dbReference type="GO" id="GO:0005615">
    <property type="term" value="C:extracellular space"/>
    <property type="evidence" value="ECO:0000318"/>
    <property type="project" value="GO_Central"/>
</dbReference>
<dbReference type="GO" id="GO:0098992">
    <property type="term" value="C:neuronal dense core vesicle"/>
    <property type="evidence" value="ECO:0000250"/>
    <property type="project" value="UniProtKB"/>
</dbReference>
<dbReference type="GO" id="GO:0005184">
    <property type="term" value="F:neuropeptide hormone activity"/>
    <property type="evidence" value="ECO:0000318"/>
    <property type="project" value="GO_Central"/>
</dbReference>
<dbReference type="GO" id="GO:0031841">
    <property type="term" value="F:neuropeptide Y receptor binding"/>
    <property type="evidence" value="ECO:0000318"/>
    <property type="project" value="GO_Central"/>
</dbReference>
<dbReference type="GO" id="GO:0007631">
    <property type="term" value="P:feeding behavior"/>
    <property type="evidence" value="ECO:0000318"/>
    <property type="project" value="GO_Central"/>
</dbReference>
<dbReference type="GO" id="GO:0007218">
    <property type="term" value="P:neuropeptide signaling pathway"/>
    <property type="evidence" value="ECO:0000318"/>
    <property type="project" value="GO_Central"/>
</dbReference>
<dbReference type="CDD" id="cd00126">
    <property type="entry name" value="PAH"/>
    <property type="match status" value="1"/>
</dbReference>
<dbReference type="Gene3D" id="6.10.250.900">
    <property type="match status" value="1"/>
</dbReference>
<dbReference type="InterPro" id="IPR001955">
    <property type="entry name" value="Pancreatic_hormone-like"/>
</dbReference>
<dbReference type="InterPro" id="IPR020392">
    <property type="entry name" value="Pancreatic_hormone-like_CS"/>
</dbReference>
<dbReference type="PANTHER" id="PTHR10533">
    <property type="entry name" value="NEUROPEPTIDE Y/PANCREATIC HORMONE/PEPTIDE YY"/>
    <property type="match status" value="1"/>
</dbReference>
<dbReference type="PANTHER" id="PTHR10533:SF5">
    <property type="entry name" value="PRO-NEUROPEPTIDE Y"/>
    <property type="match status" value="1"/>
</dbReference>
<dbReference type="Pfam" id="PF00159">
    <property type="entry name" value="Hormone_3"/>
    <property type="match status" value="1"/>
</dbReference>
<dbReference type="PRINTS" id="PR00278">
    <property type="entry name" value="PANCHORMONE"/>
</dbReference>
<dbReference type="SMART" id="SM00309">
    <property type="entry name" value="PAH"/>
    <property type="match status" value="1"/>
</dbReference>
<dbReference type="PROSITE" id="PS00265">
    <property type="entry name" value="PANCREATIC_HORMONE_1"/>
    <property type="match status" value="1"/>
</dbReference>
<dbReference type="PROSITE" id="PS50276">
    <property type="entry name" value="PANCREATIC_HORMONE_2"/>
    <property type="match status" value="1"/>
</dbReference>
<accession>P28673</accession>
<gene>
    <name type="primary">NPY</name>
</gene>
<feature type="signal peptide" evidence="1">
    <location>
        <begin position="1"/>
        <end position="28"/>
    </location>
</feature>
<feature type="peptide" id="PRO_0000025333" description="Neuropeptide Y">
    <location>
        <begin position="29"/>
        <end position="64"/>
    </location>
</feature>
<feature type="peptide" id="PRO_0000025334" description="C-flanking peptide of NPY">
    <location>
        <begin position="68"/>
        <end position="97"/>
    </location>
</feature>
<feature type="modified residue" description="Tyrosine amide" evidence="1">
    <location>
        <position position="64"/>
    </location>
</feature>
<evidence type="ECO:0000250" key="1"/>
<evidence type="ECO:0000250" key="2">
    <source>
        <dbReference type="UniProtKB" id="P07808"/>
    </source>
</evidence>
<evidence type="ECO:0000305" key="3"/>